<evidence type="ECO:0000250" key="1"/>
<evidence type="ECO:0000255" key="2"/>
<evidence type="ECO:0000256" key="3">
    <source>
        <dbReference type="SAM" id="MobiDB-lite"/>
    </source>
</evidence>
<protein>
    <recommendedName>
        <fullName>Icarapin-like</fullName>
    </recommendedName>
    <alternativeName>
        <fullName>Venom carbohydrate-rich protein</fullName>
    </alternativeName>
</protein>
<reference key="1">
    <citation type="journal article" date="2005" name="J. Allergy Clin. Immunol.">
        <title>Sequence and characterization of honeybee venom acid phosphatase.</title>
        <authorList>
            <person name="Hoffman D.R."/>
            <person name="Weimer E.T."/>
            <person name="Sakell R.H."/>
            <person name="Schmidt M."/>
        </authorList>
    </citation>
    <scope>NUCLEOTIDE SEQUENCE [MRNA]</scope>
</reference>
<reference key="2">
    <citation type="journal article" date="2006" name="Nature">
        <title>Insights into social insects from the genome of the honeybee Apis mellifera.</title>
        <authorList>
            <consortium name="Honeybee genome sequencing consortium"/>
        </authorList>
    </citation>
    <scope>NUCLEOTIDE SEQUENCE [LARGE SCALE GENOMIC DNA]</scope>
</reference>
<dbReference type="EMBL" id="AY939856">
    <property type="protein sequence ID" value="AAX33236.1"/>
    <property type="molecule type" value="mRNA"/>
</dbReference>
<dbReference type="Allergome" id="8204">
    <property type="allergen name" value="Api m 10"/>
</dbReference>
<dbReference type="Allergome" id="8205">
    <property type="allergen name" value="Api m 10.0101"/>
</dbReference>
<dbReference type="PaxDb" id="7460-GB40759-PA"/>
<dbReference type="eggNOG" id="ENOG502T7XG">
    <property type="taxonomic scope" value="Eukaryota"/>
</dbReference>
<dbReference type="InParanoid" id="Q5BLY4"/>
<dbReference type="Proteomes" id="UP000005203">
    <property type="component" value="Unplaced"/>
</dbReference>
<dbReference type="GO" id="GO:0005576">
    <property type="term" value="C:extracellular region"/>
    <property type="evidence" value="ECO:0007669"/>
    <property type="project" value="UniProtKB-SubCell"/>
</dbReference>
<feature type="signal peptide" evidence="2">
    <location>
        <begin position="1"/>
        <end position="19"/>
    </location>
</feature>
<feature type="chain" id="PRO_0000402384" description="Icarapin-like">
    <location>
        <begin position="20"/>
        <end position="223"/>
    </location>
</feature>
<feature type="region of interest" description="Disordered" evidence="3">
    <location>
        <begin position="186"/>
        <end position="223"/>
    </location>
</feature>
<feature type="compositionally biased region" description="Polar residues" evidence="3">
    <location>
        <begin position="186"/>
        <end position="203"/>
    </location>
</feature>
<feature type="glycosylation site" description="N-linked (GlcNAc...) asparagine" evidence="2">
    <location>
        <position position="126"/>
    </location>
</feature>
<feature type="glycosylation site" description="N-linked (GlcNAc...) asparagine" evidence="2">
    <location>
        <position position="142"/>
    </location>
</feature>
<feature type="glycosylation site" description="N-linked (GlcNAc...) asparagine" evidence="2">
    <location>
        <position position="168"/>
    </location>
</feature>
<feature type="glycosylation site" description="N-linked (GlcNAc...) asparagine" evidence="2">
    <location>
        <position position="193"/>
    </location>
</feature>
<sequence>MKTLGVLFIAAWFIACTHSFPGAHDEDSKEERKNVDTVLVLPSIERDQMMAATFDFPSLSFEDSDEGSNWNWNTLLRPNFLDGWYQTLQSAISAHMKKVREQMAGILSRIPEQGVVNWNKIPEGANTTSTTKIIDGHVVTINETTYTDGSDDYSTLIRVRVIDVRPQNETILTTVSSEADSDVTTLPTLIGKNETSTQSSRSVESVEDFDNEIPKNQGDVLTA</sequence>
<keyword id="KW-0020">Allergen</keyword>
<keyword id="KW-0325">Glycoprotein</keyword>
<keyword id="KW-1185">Reference proteome</keyword>
<keyword id="KW-0964">Secreted</keyword>
<keyword id="KW-0732">Signal</keyword>
<proteinExistence type="evidence at transcript level"/>
<accession>Q5BLY4</accession>
<comment type="subcellular location">
    <subcellularLocation>
        <location evidence="1">Secreted</location>
    </subcellularLocation>
</comment>
<comment type="tissue specificity">
    <text>Expressed by the venom duct.</text>
</comment>
<comment type="allergen">
    <text evidence="1">Causes an allergic reaction in human.</text>
</comment>
<name>ICA_APIME</name>
<organism>
    <name type="scientific">Apis mellifera</name>
    <name type="common">Honeybee</name>
    <dbReference type="NCBI Taxonomy" id="7460"/>
    <lineage>
        <taxon>Eukaryota</taxon>
        <taxon>Metazoa</taxon>
        <taxon>Ecdysozoa</taxon>
        <taxon>Arthropoda</taxon>
        <taxon>Hexapoda</taxon>
        <taxon>Insecta</taxon>
        <taxon>Pterygota</taxon>
        <taxon>Neoptera</taxon>
        <taxon>Endopterygota</taxon>
        <taxon>Hymenoptera</taxon>
        <taxon>Apocrita</taxon>
        <taxon>Aculeata</taxon>
        <taxon>Apoidea</taxon>
        <taxon>Anthophila</taxon>
        <taxon>Apidae</taxon>
        <taxon>Apis</taxon>
    </lineage>
</organism>